<reference key="1">
    <citation type="submission" date="1997-11" db="EMBL/GenBank/DDBJ databases">
        <title>Sequencing and characterisation of the region comprising xlyB, the second lytic enzyme of the defective prophage PBSX of Bacillus subtilis.</title>
        <authorList>
            <person name="Da Silva E."/>
            <person name="Karamata D."/>
        </authorList>
    </citation>
    <scope>NUCLEOTIDE SEQUENCE [GENOMIC DNA]</scope>
    <source>
        <strain>168</strain>
    </source>
</reference>
<reference key="2">
    <citation type="journal article" date="1997" name="Nature">
        <title>The complete genome sequence of the Gram-positive bacterium Bacillus subtilis.</title>
        <authorList>
            <person name="Kunst F."/>
            <person name="Ogasawara N."/>
            <person name="Moszer I."/>
            <person name="Albertini A.M."/>
            <person name="Alloni G."/>
            <person name="Azevedo V."/>
            <person name="Bertero M.G."/>
            <person name="Bessieres P."/>
            <person name="Bolotin A."/>
            <person name="Borchert S."/>
            <person name="Borriss R."/>
            <person name="Boursier L."/>
            <person name="Brans A."/>
            <person name="Braun M."/>
            <person name="Brignell S.C."/>
            <person name="Bron S."/>
            <person name="Brouillet S."/>
            <person name="Bruschi C.V."/>
            <person name="Caldwell B."/>
            <person name="Capuano V."/>
            <person name="Carter N.M."/>
            <person name="Choi S.-K."/>
            <person name="Codani J.-J."/>
            <person name="Connerton I.F."/>
            <person name="Cummings N.J."/>
            <person name="Daniel R.A."/>
            <person name="Denizot F."/>
            <person name="Devine K.M."/>
            <person name="Duesterhoeft A."/>
            <person name="Ehrlich S.D."/>
            <person name="Emmerson P.T."/>
            <person name="Entian K.-D."/>
            <person name="Errington J."/>
            <person name="Fabret C."/>
            <person name="Ferrari E."/>
            <person name="Foulger D."/>
            <person name="Fritz C."/>
            <person name="Fujita M."/>
            <person name="Fujita Y."/>
            <person name="Fuma S."/>
            <person name="Galizzi A."/>
            <person name="Galleron N."/>
            <person name="Ghim S.-Y."/>
            <person name="Glaser P."/>
            <person name="Goffeau A."/>
            <person name="Golightly E.J."/>
            <person name="Grandi G."/>
            <person name="Guiseppi G."/>
            <person name="Guy B.J."/>
            <person name="Haga K."/>
            <person name="Haiech J."/>
            <person name="Harwood C.R."/>
            <person name="Henaut A."/>
            <person name="Hilbert H."/>
            <person name="Holsappel S."/>
            <person name="Hosono S."/>
            <person name="Hullo M.-F."/>
            <person name="Itaya M."/>
            <person name="Jones L.-M."/>
            <person name="Joris B."/>
            <person name="Karamata D."/>
            <person name="Kasahara Y."/>
            <person name="Klaerr-Blanchard M."/>
            <person name="Klein C."/>
            <person name="Kobayashi Y."/>
            <person name="Koetter P."/>
            <person name="Koningstein G."/>
            <person name="Krogh S."/>
            <person name="Kumano M."/>
            <person name="Kurita K."/>
            <person name="Lapidus A."/>
            <person name="Lardinois S."/>
            <person name="Lauber J."/>
            <person name="Lazarevic V."/>
            <person name="Lee S.-M."/>
            <person name="Levine A."/>
            <person name="Liu H."/>
            <person name="Masuda S."/>
            <person name="Mauel C."/>
            <person name="Medigue C."/>
            <person name="Medina N."/>
            <person name="Mellado R.P."/>
            <person name="Mizuno M."/>
            <person name="Moestl D."/>
            <person name="Nakai S."/>
            <person name="Noback M."/>
            <person name="Noone D."/>
            <person name="O'Reilly M."/>
            <person name="Ogawa K."/>
            <person name="Ogiwara A."/>
            <person name="Oudega B."/>
            <person name="Park S.-H."/>
            <person name="Parro V."/>
            <person name="Pohl T.M."/>
            <person name="Portetelle D."/>
            <person name="Porwollik S."/>
            <person name="Prescott A.M."/>
            <person name="Presecan E."/>
            <person name="Pujic P."/>
            <person name="Purnelle B."/>
            <person name="Rapoport G."/>
            <person name="Rey M."/>
            <person name="Reynolds S."/>
            <person name="Rieger M."/>
            <person name="Rivolta C."/>
            <person name="Rocha E."/>
            <person name="Roche B."/>
            <person name="Rose M."/>
            <person name="Sadaie Y."/>
            <person name="Sato T."/>
            <person name="Scanlan E."/>
            <person name="Schleich S."/>
            <person name="Schroeter R."/>
            <person name="Scoffone F."/>
            <person name="Sekiguchi J."/>
            <person name="Sekowska A."/>
            <person name="Seror S.J."/>
            <person name="Serror P."/>
            <person name="Shin B.-S."/>
            <person name="Soldo B."/>
            <person name="Sorokin A."/>
            <person name="Tacconi E."/>
            <person name="Takagi T."/>
            <person name="Takahashi H."/>
            <person name="Takemaru K."/>
            <person name="Takeuchi M."/>
            <person name="Tamakoshi A."/>
            <person name="Tanaka T."/>
            <person name="Terpstra P."/>
            <person name="Tognoni A."/>
            <person name="Tosato V."/>
            <person name="Uchiyama S."/>
            <person name="Vandenbol M."/>
            <person name="Vannier F."/>
            <person name="Vassarotti A."/>
            <person name="Viari A."/>
            <person name="Wambutt R."/>
            <person name="Wedler E."/>
            <person name="Wedler H."/>
            <person name="Weitzenegger T."/>
            <person name="Winters P."/>
            <person name="Wipat A."/>
            <person name="Yamamoto H."/>
            <person name="Yamane K."/>
            <person name="Yasumoto K."/>
            <person name="Yata K."/>
            <person name="Yoshida K."/>
            <person name="Yoshikawa H.-F."/>
            <person name="Zumstein E."/>
            <person name="Yoshikawa H."/>
            <person name="Danchin A."/>
        </authorList>
    </citation>
    <scope>NUCLEOTIDE SEQUENCE [LARGE SCALE GENOMIC DNA]</scope>
    <source>
        <strain>168</strain>
    </source>
</reference>
<feature type="chain" id="PRO_0000389004" description="Uncharacterized protein YjqA">
    <location>
        <begin position="1"/>
        <end position="125"/>
    </location>
</feature>
<protein>
    <recommendedName>
        <fullName>Uncharacterized protein YjqA</fullName>
    </recommendedName>
</protein>
<organism>
    <name type="scientific">Bacillus subtilis (strain 168)</name>
    <dbReference type="NCBI Taxonomy" id="224308"/>
    <lineage>
        <taxon>Bacteria</taxon>
        <taxon>Bacillati</taxon>
        <taxon>Bacillota</taxon>
        <taxon>Bacilli</taxon>
        <taxon>Bacillales</taxon>
        <taxon>Bacillaceae</taxon>
        <taxon>Bacillus</taxon>
    </lineage>
</organism>
<keyword id="KW-1185">Reference proteome</keyword>
<name>YJQA_BACSU</name>
<accession>O34593</accession>
<accession>Q7BUX1</accession>
<sequence length="125" mass="13824">MGFIDGLLGNASTLSTAAVQEELAHILLEGEKVEAAFKLVRDLIVFTDKRLILVDKQGITGKKTEFQSIPYKSISRFSVETAGRFDLDSELKIWISGAELPAVSKQFKKDESIYDIQKVLAAVCM</sequence>
<proteinExistence type="predicted"/>
<dbReference type="EMBL" id="AF034138">
    <property type="protein sequence ID" value="AAB87515.1"/>
    <property type="molecule type" value="Genomic_DNA"/>
</dbReference>
<dbReference type="EMBL" id="AL009126">
    <property type="protein sequence ID" value="CAB13104.1"/>
    <property type="molecule type" value="Genomic_DNA"/>
</dbReference>
<dbReference type="PIR" id="A69854">
    <property type="entry name" value="A69854"/>
</dbReference>
<dbReference type="RefSeq" id="NP_389129.1">
    <property type="nucleotide sequence ID" value="NC_000964.3"/>
</dbReference>
<dbReference type="RefSeq" id="WP_003245254.1">
    <property type="nucleotide sequence ID" value="NZ_OZ025638.1"/>
</dbReference>
<dbReference type="SMR" id="O34593"/>
<dbReference type="FunCoup" id="O34593">
    <property type="interactions" value="94"/>
</dbReference>
<dbReference type="STRING" id="224308.BSU12470"/>
<dbReference type="PaxDb" id="224308-BSU12470"/>
<dbReference type="EnsemblBacteria" id="CAB13104">
    <property type="protein sequence ID" value="CAB13104"/>
    <property type="gene ID" value="BSU_12470"/>
</dbReference>
<dbReference type="GeneID" id="939415"/>
<dbReference type="KEGG" id="bsu:BSU12470"/>
<dbReference type="PATRIC" id="fig|224308.179.peg.1348"/>
<dbReference type="eggNOG" id="ENOG503172B">
    <property type="taxonomic scope" value="Bacteria"/>
</dbReference>
<dbReference type="InParanoid" id="O34593"/>
<dbReference type="OrthoDB" id="9803613at2"/>
<dbReference type="PhylomeDB" id="O34593"/>
<dbReference type="BioCyc" id="BSUB:BSU12470-MONOMER"/>
<dbReference type="Proteomes" id="UP000001570">
    <property type="component" value="Chromosome"/>
</dbReference>
<dbReference type="CDD" id="cd13225">
    <property type="entry name" value="PH-like_bacteria"/>
    <property type="match status" value="1"/>
</dbReference>
<dbReference type="Gene3D" id="2.30.29.50">
    <property type="entry name" value="Bacterial Pleckstrin homology domain"/>
    <property type="match status" value="1"/>
</dbReference>
<dbReference type="InterPro" id="IPR012544">
    <property type="entry name" value="PHb"/>
</dbReference>
<dbReference type="InterPro" id="IPR037063">
    <property type="entry name" value="PHb_sf"/>
</dbReference>
<dbReference type="PANTHER" id="PTHR35796:SF3">
    <property type="entry name" value="BHLH DOMAIN-CONTAINING PROTEIN"/>
    <property type="match status" value="1"/>
</dbReference>
<dbReference type="PANTHER" id="PTHR35796">
    <property type="entry name" value="HYPOTHETICAL CYTOSOLIC PROTEIN"/>
    <property type="match status" value="1"/>
</dbReference>
<dbReference type="Pfam" id="PF08000">
    <property type="entry name" value="bPH_1"/>
    <property type="match status" value="1"/>
</dbReference>
<dbReference type="SUPFAM" id="SSF50729">
    <property type="entry name" value="PH domain-like"/>
    <property type="match status" value="1"/>
</dbReference>
<gene>
    <name type="primary">yjqA</name>
    <name type="ordered locus">BSU12470</name>
</gene>